<name>A1AT2_MOUSE</name>
<dbReference type="EMBL" id="M25529">
    <property type="protein sequence ID" value="AAA37132.1"/>
    <property type="molecule type" value="mRNA"/>
</dbReference>
<dbReference type="EMBL" id="AF481949">
    <property type="protein sequence ID" value="AAM47489.1"/>
    <property type="molecule type" value="Genomic_DNA"/>
</dbReference>
<dbReference type="EMBL" id="BC022109">
    <property type="protein sequence ID" value="AAH22109.1"/>
    <property type="molecule type" value="mRNA"/>
</dbReference>
<dbReference type="EMBL" id="BC025445">
    <property type="protein sequence ID" value="AAH25445.1"/>
    <property type="molecule type" value="mRNA"/>
</dbReference>
<dbReference type="EMBL" id="BC049255">
    <property type="protein sequence ID" value="AAH49255.2"/>
    <property type="molecule type" value="mRNA"/>
</dbReference>
<dbReference type="EMBL" id="M75716">
    <property type="protein sequence ID" value="AAC28865.1"/>
    <property type="molecule type" value="mRNA"/>
</dbReference>
<dbReference type="CCDS" id="CCDS26138.1"/>
<dbReference type="PIR" id="I49452">
    <property type="entry name" value="I49452"/>
</dbReference>
<dbReference type="PIR" id="I49471">
    <property type="entry name" value="I49471"/>
</dbReference>
<dbReference type="RefSeq" id="NP_033270.3">
    <property type="nucleotide sequence ID" value="NM_009244.4"/>
</dbReference>
<dbReference type="SMR" id="P22599"/>
<dbReference type="BioGRID" id="203428">
    <property type="interactions" value="14"/>
</dbReference>
<dbReference type="FunCoup" id="P22599">
    <property type="interactions" value="302"/>
</dbReference>
<dbReference type="IntAct" id="P22599">
    <property type="interactions" value="1"/>
</dbReference>
<dbReference type="STRING" id="10090.ENSMUSP00000139941"/>
<dbReference type="MEROPS" id="I04.001"/>
<dbReference type="GlyConnect" id="799">
    <property type="glycosylation" value="2 N-Linked glycans (2 sites)"/>
</dbReference>
<dbReference type="GlyCosmos" id="P22599">
    <property type="glycosylation" value="3 sites, 4 glycans"/>
</dbReference>
<dbReference type="GlyGen" id="P22599">
    <property type="glycosylation" value="3 sites, 4 N-linked glycans (2 sites)"/>
</dbReference>
<dbReference type="iPTMnet" id="P22599"/>
<dbReference type="PhosphoSitePlus" id="P22599"/>
<dbReference type="SwissPalm" id="P22599"/>
<dbReference type="CPTAC" id="non-CPTAC-3556"/>
<dbReference type="jPOST" id="P22599"/>
<dbReference type="PaxDb" id="10090-ENSMUSP00000093101"/>
<dbReference type="PeptideAtlas" id="P22599"/>
<dbReference type="ProteomicsDB" id="285946"/>
<dbReference type="DNASU" id="20701"/>
<dbReference type="Ensembl" id="ENSMUST00000095450.11">
    <property type="protein sequence ID" value="ENSMUSP00000093101.5"/>
    <property type="gene ID" value="ENSMUSG00000071178.12"/>
</dbReference>
<dbReference type="Ensembl" id="ENSMUST00000164454.3">
    <property type="protein sequence ID" value="ENSMUSP00000127266.3"/>
    <property type="gene ID" value="ENSMUSG00000071178.12"/>
</dbReference>
<dbReference type="Ensembl" id="ENSMUST00000186166.7">
    <property type="protein sequence ID" value="ENSMUSP00000139941.2"/>
    <property type="gene ID" value="ENSMUSG00000071178.12"/>
</dbReference>
<dbReference type="GeneID" id="20701"/>
<dbReference type="KEGG" id="mmu:20701"/>
<dbReference type="UCSC" id="uc007owe.1">
    <property type="organism name" value="mouse"/>
</dbReference>
<dbReference type="AGR" id="MGI:891970"/>
<dbReference type="CTD" id="20701"/>
<dbReference type="MGI" id="MGI:891970">
    <property type="gene designation" value="Serpina1b"/>
</dbReference>
<dbReference type="VEuPathDB" id="HostDB:ENSMUSG00000071178"/>
<dbReference type="eggNOG" id="KOG2392">
    <property type="taxonomic scope" value="Eukaryota"/>
</dbReference>
<dbReference type="GeneTree" id="ENSGT00940000154493"/>
<dbReference type="HOGENOM" id="CLU_023330_2_1_1"/>
<dbReference type="InParanoid" id="P22599"/>
<dbReference type="OMA" id="IKERTHG"/>
<dbReference type="OrthoDB" id="671595at2759"/>
<dbReference type="PhylomeDB" id="P22599"/>
<dbReference type="TreeFam" id="TF343201"/>
<dbReference type="Reactome" id="R-MMU-114608">
    <property type="pathway name" value="Platelet degranulation"/>
</dbReference>
<dbReference type="Reactome" id="R-MMU-204005">
    <property type="pathway name" value="COPII-mediated vesicle transport"/>
</dbReference>
<dbReference type="Reactome" id="R-MMU-381426">
    <property type="pathway name" value="Regulation of Insulin-like Growth Factor (IGF) transport and uptake by Insulin-like Growth Factor Binding Proteins (IGFBPs)"/>
</dbReference>
<dbReference type="Reactome" id="R-MMU-5694530">
    <property type="pathway name" value="Cargo concentration in the ER"/>
</dbReference>
<dbReference type="Reactome" id="R-MMU-6798695">
    <property type="pathway name" value="Neutrophil degranulation"/>
</dbReference>
<dbReference type="Reactome" id="R-MMU-8957275">
    <property type="pathway name" value="Post-translational protein phosphorylation"/>
</dbReference>
<dbReference type="BioGRID-ORCS" id="20701">
    <property type="hits" value="3 hits in 38 CRISPR screens"/>
</dbReference>
<dbReference type="ChiTaRS" id="Serpina1b">
    <property type="organism name" value="mouse"/>
</dbReference>
<dbReference type="PRO" id="PR:P22599"/>
<dbReference type="Proteomes" id="UP000000589">
    <property type="component" value="Chromosome 12"/>
</dbReference>
<dbReference type="RNAct" id="P22599">
    <property type="molecule type" value="protein"/>
</dbReference>
<dbReference type="Bgee" id="ENSMUSG00000071178">
    <property type="expression patterns" value="Expressed in left lobe of liver and 105 other cell types or tissues"/>
</dbReference>
<dbReference type="ExpressionAtlas" id="P22599">
    <property type="expression patterns" value="baseline and differential"/>
</dbReference>
<dbReference type="GO" id="GO:0005576">
    <property type="term" value="C:extracellular region"/>
    <property type="evidence" value="ECO:0000314"/>
    <property type="project" value="MGI"/>
</dbReference>
<dbReference type="GO" id="GO:0005615">
    <property type="term" value="C:extracellular space"/>
    <property type="evidence" value="ECO:0007669"/>
    <property type="project" value="InterPro"/>
</dbReference>
<dbReference type="GO" id="GO:0004867">
    <property type="term" value="F:serine-type endopeptidase inhibitor activity"/>
    <property type="evidence" value="ECO:0000315"/>
    <property type="project" value="MGI"/>
</dbReference>
<dbReference type="GO" id="GO:0006953">
    <property type="term" value="P:acute-phase response"/>
    <property type="evidence" value="ECO:0007669"/>
    <property type="project" value="UniProtKB-KW"/>
</dbReference>
<dbReference type="GO" id="GO:0001701">
    <property type="term" value="P:in utero embryonic development"/>
    <property type="evidence" value="ECO:0000315"/>
    <property type="project" value="MGI"/>
</dbReference>
<dbReference type="GO" id="GO:0006487">
    <property type="term" value="P:protein N-linked glycosylation"/>
    <property type="evidence" value="ECO:0000314"/>
    <property type="project" value="MGI"/>
</dbReference>
<dbReference type="GO" id="GO:0034097">
    <property type="term" value="P:response to cytokine"/>
    <property type="evidence" value="ECO:0000314"/>
    <property type="project" value="MGI"/>
</dbReference>
<dbReference type="GO" id="GO:0043434">
    <property type="term" value="P:response to peptide hormone"/>
    <property type="evidence" value="ECO:0000314"/>
    <property type="project" value="MGI"/>
</dbReference>
<dbReference type="CDD" id="cd02056">
    <property type="entry name" value="serpinA1_A1AT"/>
    <property type="match status" value="1"/>
</dbReference>
<dbReference type="FunFam" id="2.30.39.10:FF:000003">
    <property type="entry name" value="alpha-1-antitrypsin isoform X1"/>
    <property type="match status" value="1"/>
</dbReference>
<dbReference type="FunFam" id="3.30.497.10:FF:000001">
    <property type="entry name" value="Serine protease inhibitor"/>
    <property type="match status" value="1"/>
</dbReference>
<dbReference type="FunFam" id="2.10.310.10:FF:000001">
    <property type="entry name" value="Serpin family A member 1"/>
    <property type="match status" value="1"/>
</dbReference>
<dbReference type="Gene3D" id="2.30.39.10">
    <property type="entry name" value="Alpha-1-antitrypsin, domain 1"/>
    <property type="match status" value="1"/>
</dbReference>
<dbReference type="Gene3D" id="3.30.497.10">
    <property type="entry name" value="Antithrombin, subunit I, domain 2"/>
    <property type="match status" value="1"/>
</dbReference>
<dbReference type="Gene3D" id="2.10.310.10">
    <property type="entry name" value="Serpins superfamily"/>
    <property type="match status" value="1"/>
</dbReference>
<dbReference type="InterPro" id="IPR023795">
    <property type="entry name" value="Serpin_CS"/>
</dbReference>
<dbReference type="InterPro" id="IPR023796">
    <property type="entry name" value="Serpin_dom"/>
</dbReference>
<dbReference type="InterPro" id="IPR000215">
    <property type="entry name" value="Serpin_fam"/>
</dbReference>
<dbReference type="InterPro" id="IPR036186">
    <property type="entry name" value="Serpin_sf"/>
</dbReference>
<dbReference type="InterPro" id="IPR042178">
    <property type="entry name" value="Serpin_sf_1"/>
</dbReference>
<dbReference type="InterPro" id="IPR042185">
    <property type="entry name" value="Serpin_sf_2"/>
</dbReference>
<dbReference type="PANTHER" id="PTHR11461:SF165">
    <property type="entry name" value="ALPHA-1-ANTITRYPSIN"/>
    <property type="match status" value="1"/>
</dbReference>
<dbReference type="PANTHER" id="PTHR11461">
    <property type="entry name" value="SERINE PROTEASE INHIBITOR, SERPIN"/>
    <property type="match status" value="1"/>
</dbReference>
<dbReference type="Pfam" id="PF00079">
    <property type="entry name" value="Serpin"/>
    <property type="match status" value="1"/>
</dbReference>
<dbReference type="SMART" id="SM00093">
    <property type="entry name" value="SERPIN"/>
    <property type="match status" value="1"/>
</dbReference>
<dbReference type="SUPFAM" id="SSF56574">
    <property type="entry name" value="Serpins"/>
    <property type="match status" value="1"/>
</dbReference>
<dbReference type="PROSITE" id="PS00284">
    <property type="entry name" value="SERPIN"/>
    <property type="match status" value="1"/>
</dbReference>
<evidence type="ECO:0000250" key="1"/>
<evidence type="ECO:0000255" key="2"/>
<evidence type="ECO:0000269" key="3">
    <source>
    </source>
</evidence>
<evidence type="ECO:0000269" key="4">
    <source>
    </source>
</evidence>
<evidence type="ECO:0000269" key="5">
    <source>
    </source>
</evidence>
<evidence type="ECO:0000305" key="6"/>
<feature type="signal peptide" evidence="1">
    <location>
        <begin position="1"/>
        <end position="24"/>
    </location>
</feature>
<feature type="chain" id="PRO_0000032389" description="Alpha-1-antitrypsin 1-2">
    <location>
        <begin position="25"/>
        <end position="413"/>
    </location>
</feature>
<feature type="region of interest" description="RCL">
    <location>
        <begin position="368"/>
        <end position="387"/>
    </location>
</feature>
<feature type="site" description="Reactive bond" evidence="1">
    <location>
        <begin position="377"/>
        <end position="378"/>
    </location>
</feature>
<feature type="glycosylation site" description="N-linked (GlcNAc...) asparagine" evidence="2">
    <location>
        <position position="64"/>
    </location>
</feature>
<feature type="glycosylation site" description="N-linked (GlcNAc...) asparagine" evidence="4">
    <location>
        <position position="101"/>
    </location>
</feature>
<feature type="glycosylation site" description="N-linked (GlcNAc...) asparagine" evidence="4">
    <location>
        <position position="265"/>
    </location>
</feature>
<feature type="sequence conflict" description="In Ref. 1, 2 and 3; AAH22109/AAH25445/AAH49255." evidence="6" ref="1 2 3">
    <original>M</original>
    <variation>L</variation>
    <location>
        <position position="18"/>
    </location>
</feature>
<feature type="sequence conflict" description="In Ref. 1; AAA37132." evidence="6" ref="1">
    <original>A</original>
    <variation>G</variation>
    <location>
        <position position="203"/>
    </location>
</feature>
<feature type="sequence conflict" description="In Ref. 1, 2 and 3; AAH22109/AAH25445/AAH49255." evidence="6" ref="1 2 3">
    <original>M</original>
    <variation>T</variation>
    <location>
        <position position="240"/>
    </location>
</feature>
<feature type="sequence conflict" description="In Ref. 1, 2 and 3; AAH22109/AAH25445/AAH49255." evidence="6" ref="1 2 3">
    <original>I</original>
    <variation>T</variation>
    <location>
        <position position="252"/>
    </location>
</feature>
<feature type="sequence conflict" description="In Ref. 2; AAM47489 and 3; AAH22109/AAH25445/AAH49255." evidence="6" ref="2 3">
    <original>A</original>
    <variation>V</variation>
    <location>
        <position position="263"/>
    </location>
</feature>
<feature type="sequence conflict" description="In Ref. 2; AAM47489 and 3; AAH22109/AAH25445/AAH49255." evidence="6" ref="2 3">
    <original>N</original>
    <variation>S</variation>
    <location>
        <position position="286"/>
    </location>
</feature>
<feature type="sequence conflict" description="In Ref. 2; AAM47489 and 3; AAH22109/AAH25445/AAH49255." evidence="6" ref="2 3">
    <original>R</original>
    <variation>H</variation>
    <location>
        <position position="298"/>
    </location>
</feature>
<feature type="sequence conflict" description="In Ref. 1; AAA37132." evidence="6" ref="1">
    <original>D</original>
    <variation>E</variation>
    <location>
        <position position="314"/>
    </location>
</feature>
<reference key="1">
    <citation type="journal article" date="1990" name="Genomics">
        <title>Complete cDNA sequence and chromosomal localization of mouse alpha 1-antitrypsin.</title>
        <authorList>
            <person name="Sifers R.N."/>
            <person name="Ledley F.D."/>
            <person name="Reed-Fourquet L."/>
            <person name="Ledbetter D.H."/>
            <person name="Ledbetter S.A."/>
            <person name="Woo S.L.C."/>
        </authorList>
    </citation>
    <scope>NUCLEOTIDE SEQUENCE [MRNA]</scope>
</reference>
<reference key="2">
    <citation type="journal article" date="2002" name="Genomics">
        <title>The murine alpha(1)-proteinase inhibitor gene family: polymorphism, chromosomal location, and structure.</title>
        <authorList>
            <person name="Barbour K.W."/>
            <person name="Wei F."/>
            <person name="Brannan C."/>
            <person name="Flotte T.R."/>
            <person name="Baumann H."/>
            <person name="Berger F.G."/>
        </authorList>
    </citation>
    <scope>NUCLEOTIDE SEQUENCE [GENOMIC DNA]</scope>
    <source>
        <strain>129/J</strain>
    </source>
</reference>
<reference key="3">
    <citation type="journal article" date="2004" name="Genome Res.">
        <title>The status, quality, and expansion of the NIH full-length cDNA project: the Mammalian Gene Collection (MGC).</title>
        <authorList>
            <consortium name="The MGC Project Team"/>
        </authorList>
    </citation>
    <scope>NUCLEOTIDE SEQUENCE [LARGE SCALE MRNA]</scope>
    <source>
        <strain>FVB/N</strain>
        <tissue>Liver</tissue>
    </source>
</reference>
<reference key="4">
    <citation type="journal article" date="1991" name="Proc. Natl. Acad. Sci. U.S.A.">
        <title>Multiple murine alpha 1-protease inhibitor genes show unusual evolutionary divergence.</title>
        <authorList>
            <person name="Borriello F."/>
            <person name="Krauter K.S."/>
        </authorList>
    </citation>
    <scope>NUCLEOTIDE SEQUENCE [MRNA] OF 12-413</scope>
    <source>
        <strain>C57BL/6J</strain>
        <tissue>Liver</tissue>
    </source>
</reference>
<reference key="5">
    <citation type="journal article" date="1996" name="Biochem. Biophys. Res. Commun.">
        <title>The expression and characterization of five recombinant murine alpha 1-protease inhibitor proteins.</title>
        <authorList>
            <person name="Paterson T."/>
            <person name="Moore S."/>
        </authorList>
    </citation>
    <scope>FUNCTION</scope>
    <scope>SUBCELLULAR LOCATION</scope>
</reference>
<reference key="6">
    <citation type="journal article" date="2002" name="Mol. Biol. Evol.">
        <title>Functional diversification during evolution of the murine alpha(1)-proteinase inhibitor family: role of the hypervariable reactive center loop.</title>
        <authorList>
            <person name="Barbour K.W."/>
            <person name="Goodwin R.L."/>
            <person name="Guillonneau F."/>
            <person name="Wang Y."/>
            <person name="Baumann H."/>
            <person name="Berger F.G."/>
        </authorList>
    </citation>
    <scope>FUNCTION</scope>
    <scope>SUBCELLULAR LOCATION</scope>
    <scope>REGION RCL</scope>
</reference>
<reference key="7">
    <citation type="journal article" date="2003" name="Genomics">
        <title>A review and comparison of the murine alpha1-antitrypsin and alpha1-antichymotrypsin multigene clusters with the human clade A serpins.</title>
        <authorList>
            <person name="Forsyth S."/>
            <person name="Horvath A."/>
            <person name="Coughlin P."/>
        </authorList>
    </citation>
    <scope>GENE FAMILY</scope>
    <scope>NOMENCLATURE</scope>
</reference>
<reference key="8">
    <citation type="journal article" date="2006" name="J. Proteome Res.">
        <title>Proteome-wide characterization of N-glycosylation events by diagonal chromatography.</title>
        <authorList>
            <person name="Ghesquiere B."/>
            <person name="Van Damme J."/>
            <person name="Martens L."/>
            <person name="Vandekerckhove J."/>
            <person name="Gevaert K."/>
        </authorList>
    </citation>
    <scope>GLYCOSYLATION [LARGE SCALE ANALYSIS] AT ASN-101 AND ASN-265</scope>
    <source>
        <strain>C57BL/6J</strain>
        <tissue>Plasma</tissue>
    </source>
</reference>
<reference key="9">
    <citation type="journal article" date="2010" name="Cell">
        <title>A tissue-specific atlas of mouse protein phosphorylation and expression.</title>
        <authorList>
            <person name="Huttlin E.L."/>
            <person name="Jedrychowski M.P."/>
            <person name="Elias J.E."/>
            <person name="Goswami T."/>
            <person name="Rad R."/>
            <person name="Beausoleil S.A."/>
            <person name="Villen J."/>
            <person name="Haas W."/>
            <person name="Sowa M.E."/>
            <person name="Gygi S.P."/>
        </authorList>
    </citation>
    <scope>IDENTIFICATION BY MASS SPECTROMETRY [LARGE SCALE ANALYSIS]</scope>
    <source>
        <tissue>Brain</tissue>
        <tissue>Brown adipose tissue</tissue>
        <tissue>Heart</tissue>
        <tissue>Kidney</tissue>
        <tissue>Liver</tissue>
        <tissue>Lung</tissue>
        <tissue>Pancreas</tissue>
        <tissue>Spleen</tissue>
        <tissue>Testis</tissue>
    </source>
</reference>
<protein>
    <recommendedName>
        <fullName>Alpha-1-antitrypsin 1-2</fullName>
        <shortName>AAT</shortName>
    </recommendedName>
    <alternativeName>
        <fullName>Alpha-1 protease inhibitor 2</fullName>
    </alternativeName>
    <alternativeName>
        <fullName>Alpha-1-antiproteinase</fullName>
    </alternativeName>
    <alternativeName>
        <fullName>Serine protease inhibitor 1-2</fullName>
    </alternativeName>
    <alternativeName>
        <fullName>Serine protease inhibitor A1b</fullName>
        <shortName>Serpin A1b</shortName>
    </alternativeName>
</protein>
<comment type="function">
    <text evidence="3 5">Inhibitor of serine proteases. Its primary target is elastase, but it also has a moderate affinity for plasmin and thrombin.</text>
</comment>
<comment type="subcellular location">
    <subcellularLocation>
        <location evidence="3 5">Secreted</location>
    </subcellularLocation>
</comment>
<comment type="domain">
    <text evidence="1">The reactive center loop (RCL) extends out from the body of the protein and directs binding to the target protease. The protease cleaves the serpin at the reactive site within the RCL, establishing a covalent linkage between the carboxyl group of the serpin reactive site and the serine hydroxyl of the protease. The resulting inactive serpin-protease complex is highly stable (By similarity). Variability within the reactive center loop (RCL) sequences of Serpina1-related genes may determine target protease specificity.</text>
</comment>
<comment type="miscellaneous">
    <text>Murine alpha-1-antitrypsin is represented by a cluster of up to 6 individual Serpina1-related genes. The precise complement of Serpina1-related genes present varies according to the strain of the animal.</text>
</comment>
<comment type="similarity">
    <text evidence="6">Belongs to the serpin family.</text>
</comment>
<accession>P22599</accession>
<accession>Q61283</accession>
<accession>Q80ZH5</accession>
<accession>Q8VC20</accession>
<gene>
    <name type="primary">Serpina1b</name>
    <name type="synonym">Aat2</name>
    <name type="synonym">Dom2</name>
    <name type="synonym">Spi1-2</name>
</gene>
<sequence length="413" mass="45975">MTPSISWGLLLLAGLCCMVPSFLAEDVQETDTSQKDQSPASHEIATNLGDFAISLYRELVHQSNTSNIFFSPVSIATAFAMLSLGSKGDTHTQILEGLQFNLTQTSEADIHKSFQHLLQTLNRPDSELQLSTGNGLFVNNDLKLVEKFLEEAKNHYQAEVFSVNFAESEEAKKVINDFVEKGTQGKIVEAVKELDQDTVFALANYILFKGKWKKPFDPENTEEAEFHVDKSTTVKVPMMMLSGMLDVHHCSILSSWVLLMDYAGNASAVFLLPEDGKMQHLEQTLNKELISKILLNRRRRLVQIHIPRLSISGDYNLKTLMSPLGITRIFNNGADLSGITEENAPLKLSKAVHKAVLTIDETGTEAAAATVFEAVPMSMPPILRFDHPFLFIIFEEHTQSPIFVGKVVDPTHK</sequence>
<keyword id="KW-0011">Acute phase</keyword>
<keyword id="KW-0325">Glycoprotein</keyword>
<keyword id="KW-0646">Protease inhibitor</keyword>
<keyword id="KW-1185">Reference proteome</keyword>
<keyword id="KW-0964">Secreted</keyword>
<keyword id="KW-0722">Serine protease inhibitor</keyword>
<keyword id="KW-0732">Signal</keyword>
<proteinExistence type="evidence at protein level"/>
<organism>
    <name type="scientific">Mus musculus</name>
    <name type="common">Mouse</name>
    <dbReference type="NCBI Taxonomy" id="10090"/>
    <lineage>
        <taxon>Eukaryota</taxon>
        <taxon>Metazoa</taxon>
        <taxon>Chordata</taxon>
        <taxon>Craniata</taxon>
        <taxon>Vertebrata</taxon>
        <taxon>Euteleostomi</taxon>
        <taxon>Mammalia</taxon>
        <taxon>Eutheria</taxon>
        <taxon>Euarchontoglires</taxon>
        <taxon>Glires</taxon>
        <taxon>Rodentia</taxon>
        <taxon>Myomorpha</taxon>
        <taxon>Muroidea</taxon>
        <taxon>Muridae</taxon>
        <taxon>Murinae</taxon>
        <taxon>Mus</taxon>
        <taxon>Mus</taxon>
    </lineage>
</organism>